<organism>
    <name type="scientific">Shewanella denitrificans (strain OS217 / ATCC BAA-1090 / DSM 15013)</name>
    <dbReference type="NCBI Taxonomy" id="318161"/>
    <lineage>
        <taxon>Bacteria</taxon>
        <taxon>Pseudomonadati</taxon>
        <taxon>Pseudomonadota</taxon>
        <taxon>Gammaproteobacteria</taxon>
        <taxon>Alteromonadales</taxon>
        <taxon>Shewanellaceae</taxon>
        <taxon>Shewanella</taxon>
    </lineage>
</organism>
<proteinExistence type="inferred from homology"/>
<evidence type="ECO:0000255" key="1">
    <source>
        <dbReference type="HAMAP-Rule" id="MF_00226"/>
    </source>
</evidence>
<protein>
    <recommendedName>
        <fullName evidence="1">CinA-like protein</fullName>
    </recommendedName>
</protein>
<comment type="similarity">
    <text evidence="1">Belongs to the CinA family.</text>
</comment>
<name>CINAL_SHEDO</name>
<accession>Q12SN4</accession>
<sequence length="424" mass="46017">MKLEMICTGEEVLSGQILDTNAAWFANVMMDMGVETQYRVTVGDRLEDLVAVFRERSLHADVILVNGGLGPTSDDMSAQAMAMAKGEPLVENALWRHTLEEWFARYNREMPRSNLKQAMLPASAIMVDNPVGTACGFRVKLNNAWLFFTPGVPSELKHMVHEQFIPFIRSEYELDEQSSVEKLLTLGQGESAIGDILSEVLLPEGISFGYRSFMPYIEVKIFARGQKAMAQLGSITSQVKHALGAVVVAEGKTSLAAEIHARLFQSGFSLSVAESCTGGMIASQLTDFPGSSSYFQQGLVTYSNESKVKLLGVLPQTLDDHGAVSIATVEAMAIGARNILDSDFALATSGIAGPDGGTEDKPVGTVAIALATKFGTYSQMVKLPRRSRELVRNLTAAIALDMLRRALLDEAVIVDYPSVQRLAK</sequence>
<gene>
    <name type="ordered locus">Sden_0246</name>
</gene>
<dbReference type="EMBL" id="CP000302">
    <property type="protein sequence ID" value="ABE53542.1"/>
    <property type="molecule type" value="Genomic_DNA"/>
</dbReference>
<dbReference type="RefSeq" id="WP_011494709.1">
    <property type="nucleotide sequence ID" value="NC_007954.1"/>
</dbReference>
<dbReference type="SMR" id="Q12SN4"/>
<dbReference type="STRING" id="318161.Sden_0246"/>
<dbReference type="KEGG" id="sdn:Sden_0246"/>
<dbReference type="eggNOG" id="COG1058">
    <property type="taxonomic scope" value="Bacteria"/>
</dbReference>
<dbReference type="eggNOG" id="COG1546">
    <property type="taxonomic scope" value="Bacteria"/>
</dbReference>
<dbReference type="HOGENOM" id="CLU_030805_9_2_6"/>
<dbReference type="OrthoDB" id="9801454at2"/>
<dbReference type="Proteomes" id="UP000001982">
    <property type="component" value="Chromosome"/>
</dbReference>
<dbReference type="CDD" id="cd00885">
    <property type="entry name" value="cinA"/>
    <property type="match status" value="1"/>
</dbReference>
<dbReference type="Gene3D" id="3.90.950.20">
    <property type="entry name" value="CinA-like"/>
    <property type="match status" value="1"/>
</dbReference>
<dbReference type="Gene3D" id="3.40.980.10">
    <property type="entry name" value="MoaB/Mog-like domain"/>
    <property type="match status" value="1"/>
</dbReference>
<dbReference type="HAMAP" id="MF_00226_B">
    <property type="entry name" value="CinA_B"/>
    <property type="match status" value="1"/>
</dbReference>
<dbReference type="InterPro" id="IPR050101">
    <property type="entry name" value="CinA"/>
</dbReference>
<dbReference type="InterPro" id="IPR036653">
    <property type="entry name" value="CinA-like_C"/>
</dbReference>
<dbReference type="InterPro" id="IPR008136">
    <property type="entry name" value="CinA_C"/>
</dbReference>
<dbReference type="InterPro" id="IPR008135">
    <property type="entry name" value="Competence-induced_CinA"/>
</dbReference>
<dbReference type="InterPro" id="IPR036425">
    <property type="entry name" value="MoaB/Mog-like_dom_sf"/>
</dbReference>
<dbReference type="InterPro" id="IPR001453">
    <property type="entry name" value="MoaB/Mog_dom"/>
</dbReference>
<dbReference type="NCBIfam" id="TIGR00200">
    <property type="entry name" value="cinA_nterm"/>
    <property type="match status" value="1"/>
</dbReference>
<dbReference type="NCBIfam" id="TIGR00177">
    <property type="entry name" value="molyb_syn"/>
    <property type="match status" value="1"/>
</dbReference>
<dbReference type="NCBIfam" id="TIGR00199">
    <property type="entry name" value="PncC_domain"/>
    <property type="match status" value="1"/>
</dbReference>
<dbReference type="PANTHER" id="PTHR13939">
    <property type="entry name" value="NICOTINAMIDE-NUCLEOTIDE AMIDOHYDROLASE PNCC"/>
    <property type="match status" value="1"/>
</dbReference>
<dbReference type="PANTHER" id="PTHR13939:SF0">
    <property type="entry name" value="NMN AMIDOHYDROLASE-LIKE PROTEIN YFAY"/>
    <property type="match status" value="1"/>
</dbReference>
<dbReference type="Pfam" id="PF02464">
    <property type="entry name" value="CinA"/>
    <property type="match status" value="1"/>
</dbReference>
<dbReference type="Pfam" id="PF00994">
    <property type="entry name" value="MoCF_biosynth"/>
    <property type="match status" value="1"/>
</dbReference>
<dbReference type="PIRSF" id="PIRSF006728">
    <property type="entry name" value="CinA"/>
    <property type="match status" value="1"/>
</dbReference>
<dbReference type="SMART" id="SM00852">
    <property type="entry name" value="MoCF_biosynth"/>
    <property type="match status" value="1"/>
</dbReference>
<dbReference type="SUPFAM" id="SSF142433">
    <property type="entry name" value="CinA-like"/>
    <property type="match status" value="1"/>
</dbReference>
<dbReference type="SUPFAM" id="SSF53218">
    <property type="entry name" value="Molybdenum cofactor biosynthesis proteins"/>
    <property type="match status" value="1"/>
</dbReference>
<feature type="chain" id="PRO_1000071775" description="CinA-like protein">
    <location>
        <begin position="1"/>
        <end position="424"/>
    </location>
</feature>
<reference key="1">
    <citation type="submission" date="2006-03" db="EMBL/GenBank/DDBJ databases">
        <title>Complete sequence of Shewanella denitrificans OS217.</title>
        <authorList>
            <consortium name="US DOE Joint Genome Institute"/>
            <person name="Copeland A."/>
            <person name="Lucas S."/>
            <person name="Lapidus A."/>
            <person name="Barry K."/>
            <person name="Detter J.C."/>
            <person name="Glavina del Rio T."/>
            <person name="Hammon N."/>
            <person name="Israni S."/>
            <person name="Dalin E."/>
            <person name="Tice H."/>
            <person name="Pitluck S."/>
            <person name="Brettin T."/>
            <person name="Bruce D."/>
            <person name="Han C."/>
            <person name="Tapia R."/>
            <person name="Gilna P."/>
            <person name="Kiss H."/>
            <person name="Schmutz J."/>
            <person name="Larimer F."/>
            <person name="Land M."/>
            <person name="Hauser L."/>
            <person name="Kyrpides N."/>
            <person name="Lykidis A."/>
            <person name="Richardson P."/>
        </authorList>
    </citation>
    <scope>NUCLEOTIDE SEQUENCE [LARGE SCALE GENOMIC DNA]</scope>
    <source>
        <strain>OS217 / ATCC BAA-1090 / DSM 15013</strain>
    </source>
</reference>
<keyword id="KW-1185">Reference proteome</keyword>